<feature type="chain" id="PRO_1000141046" description="Small ribosomal subunit protein uS11">
    <location>
        <begin position="1"/>
        <end position="129"/>
    </location>
</feature>
<gene>
    <name evidence="1" type="primary">rpsK</name>
    <name type="ordered locus">APJL_1818</name>
</gene>
<comment type="function">
    <text evidence="1">Located on the platform of the 30S subunit, it bridges several disparate RNA helices of the 16S rRNA. Forms part of the Shine-Dalgarno cleft in the 70S ribosome.</text>
</comment>
<comment type="subunit">
    <text evidence="1">Part of the 30S ribosomal subunit. Interacts with proteins S7 and S18. Binds to IF-3.</text>
</comment>
<comment type="similarity">
    <text evidence="1">Belongs to the universal ribosomal protein uS11 family.</text>
</comment>
<organism>
    <name type="scientific">Actinobacillus pleuropneumoniae serotype 3 (strain JL03)</name>
    <dbReference type="NCBI Taxonomy" id="434271"/>
    <lineage>
        <taxon>Bacteria</taxon>
        <taxon>Pseudomonadati</taxon>
        <taxon>Pseudomonadota</taxon>
        <taxon>Gammaproteobacteria</taxon>
        <taxon>Pasteurellales</taxon>
        <taxon>Pasteurellaceae</taxon>
        <taxon>Actinobacillus</taxon>
    </lineage>
</organism>
<protein>
    <recommendedName>
        <fullName evidence="1">Small ribosomal subunit protein uS11</fullName>
    </recommendedName>
    <alternativeName>
        <fullName evidence="2">30S ribosomal protein S11</fullName>
    </alternativeName>
</protein>
<sequence>MAKTPVRARKRVKKQIADGVAHIHASFNNTIVTITDRQGNALAWATAGGSGFRGSRKSTPFAAQVAAERCAEAVKEFGLKNLEVMVKGPGPGRESTIRALNAAGFRITNITDVTPIPHNGCRPPKKRRV</sequence>
<keyword id="KW-0687">Ribonucleoprotein</keyword>
<keyword id="KW-0689">Ribosomal protein</keyword>
<keyword id="KW-0694">RNA-binding</keyword>
<keyword id="KW-0699">rRNA-binding</keyword>
<accession>B0BSV4</accession>
<name>RS11_ACTPJ</name>
<dbReference type="EMBL" id="CP000687">
    <property type="protein sequence ID" value="ABY70368.1"/>
    <property type="molecule type" value="Genomic_DNA"/>
</dbReference>
<dbReference type="RefSeq" id="WP_005599323.1">
    <property type="nucleotide sequence ID" value="NC_010278.1"/>
</dbReference>
<dbReference type="SMR" id="B0BSV4"/>
<dbReference type="GeneID" id="92743632"/>
<dbReference type="KEGG" id="apj:APJL_1818"/>
<dbReference type="HOGENOM" id="CLU_072439_5_0_6"/>
<dbReference type="Proteomes" id="UP000008547">
    <property type="component" value="Chromosome"/>
</dbReference>
<dbReference type="GO" id="GO:1990904">
    <property type="term" value="C:ribonucleoprotein complex"/>
    <property type="evidence" value="ECO:0007669"/>
    <property type="project" value="UniProtKB-KW"/>
</dbReference>
<dbReference type="GO" id="GO:0005840">
    <property type="term" value="C:ribosome"/>
    <property type="evidence" value="ECO:0007669"/>
    <property type="project" value="UniProtKB-KW"/>
</dbReference>
<dbReference type="GO" id="GO:0019843">
    <property type="term" value="F:rRNA binding"/>
    <property type="evidence" value="ECO:0007669"/>
    <property type="project" value="UniProtKB-UniRule"/>
</dbReference>
<dbReference type="GO" id="GO:0003735">
    <property type="term" value="F:structural constituent of ribosome"/>
    <property type="evidence" value="ECO:0007669"/>
    <property type="project" value="InterPro"/>
</dbReference>
<dbReference type="GO" id="GO:0006412">
    <property type="term" value="P:translation"/>
    <property type="evidence" value="ECO:0007669"/>
    <property type="project" value="UniProtKB-UniRule"/>
</dbReference>
<dbReference type="FunFam" id="3.30.420.80:FF:000001">
    <property type="entry name" value="30S ribosomal protein S11"/>
    <property type="match status" value="1"/>
</dbReference>
<dbReference type="Gene3D" id="3.30.420.80">
    <property type="entry name" value="Ribosomal protein S11"/>
    <property type="match status" value="1"/>
</dbReference>
<dbReference type="HAMAP" id="MF_01310">
    <property type="entry name" value="Ribosomal_uS11"/>
    <property type="match status" value="1"/>
</dbReference>
<dbReference type="InterPro" id="IPR001971">
    <property type="entry name" value="Ribosomal_uS11"/>
</dbReference>
<dbReference type="InterPro" id="IPR019981">
    <property type="entry name" value="Ribosomal_uS11_bac-type"/>
</dbReference>
<dbReference type="InterPro" id="IPR018102">
    <property type="entry name" value="Ribosomal_uS11_CS"/>
</dbReference>
<dbReference type="InterPro" id="IPR036967">
    <property type="entry name" value="Ribosomal_uS11_sf"/>
</dbReference>
<dbReference type="NCBIfam" id="NF003698">
    <property type="entry name" value="PRK05309.1"/>
    <property type="match status" value="1"/>
</dbReference>
<dbReference type="NCBIfam" id="TIGR03632">
    <property type="entry name" value="uS11_bact"/>
    <property type="match status" value="1"/>
</dbReference>
<dbReference type="PANTHER" id="PTHR11759">
    <property type="entry name" value="40S RIBOSOMAL PROTEIN S14/30S RIBOSOMAL PROTEIN S11"/>
    <property type="match status" value="1"/>
</dbReference>
<dbReference type="Pfam" id="PF00411">
    <property type="entry name" value="Ribosomal_S11"/>
    <property type="match status" value="1"/>
</dbReference>
<dbReference type="PIRSF" id="PIRSF002131">
    <property type="entry name" value="Ribosomal_S11"/>
    <property type="match status" value="1"/>
</dbReference>
<dbReference type="SUPFAM" id="SSF53137">
    <property type="entry name" value="Translational machinery components"/>
    <property type="match status" value="1"/>
</dbReference>
<dbReference type="PROSITE" id="PS00054">
    <property type="entry name" value="RIBOSOMAL_S11"/>
    <property type="match status" value="1"/>
</dbReference>
<proteinExistence type="inferred from homology"/>
<evidence type="ECO:0000255" key="1">
    <source>
        <dbReference type="HAMAP-Rule" id="MF_01310"/>
    </source>
</evidence>
<evidence type="ECO:0000305" key="2"/>
<reference key="1">
    <citation type="journal article" date="2008" name="PLoS ONE">
        <title>Genome biology of Actinobacillus pleuropneumoniae JL03, an isolate of serotype 3 prevalent in China.</title>
        <authorList>
            <person name="Xu Z."/>
            <person name="Zhou Y."/>
            <person name="Li L."/>
            <person name="Zhou R."/>
            <person name="Xiao S."/>
            <person name="Wan Y."/>
            <person name="Zhang S."/>
            <person name="Wang K."/>
            <person name="Li W."/>
            <person name="Li L."/>
            <person name="Jin H."/>
            <person name="Kang M."/>
            <person name="Dalai B."/>
            <person name="Li T."/>
            <person name="Liu L."/>
            <person name="Cheng Y."/>
            <person name="Zhang L."/>
            <person name="Xu T."/>
            <person name="Zheng H."/>
            <person name="Pu S."/>
            <person name="Wang B."/>
            <person name="Gu W."/>
            <person name="Zhang X.L."/>
            <person name="Zhu G.-F."/>
            <person name="Wang S."/>
            <person name="Zhao G.-P."/>
            <person name="Chen H."/>
        </authorList>
    </citation>
    <scope>NUCLEOTIDE SEQUENCE [LARGE SCALE GENOMIC DNA]</scope>
    <source>
        <strain>JL03</strain>
    </source>
</reference>